<proteinExistence type="inferred from homology"/>
<sequence>MVKVYAPASSANMSVGFDVLGAAVTPVDGALLGDVVTVEAAETFSLNNLGRFADKLPSEPRENIVYQCWERFCQELGKQIPVAMTLEKNMPIGSGLGSSACSVVAALMAMNEHCGKPLNDTRLLALMGELEGRISGSIHYDNVAPCFLGGMQLMIEENDIISQQVPGFDEWLWVLAYPGIKVSTAEARAILPAQYRRQDCIAHGRHLAGFIHACYSRQPELAAKLMKDVIAEPYRERLLPGFRQARQAVAEIGAVASGISGSGPTLFALCDKPDTAQRVADWLGKNYLQNQEGFVHICRLDTAGARVLEN</sequence>
<reference key="1">
    <citation type="journal article" date="2008" name="J. Bacteriol.">
        <title>The pangenome structure of Escherichia coli: comparative genomic analysis of E. coli commensal and pathogenic isolates.</title>
        <authorList>
            <person name="Rasko D.A."/>
            <person name="Rosovitz M.J."/>
            <person name="Myers G.S.A."/>
            <person name="Mongodin E.F."/>
            <person name="Fricke W.F."/>
            <person name="Gajer P."/>
            <person name="Crabtree J."/>
            <person name="Sebaihia M."/>
            <person name="Thomson N.R."/>
            <person name="Chaudhuri R."/>
            <person name="Henderson I.R."/>
            <person name="Sperandio V."/>
            <person name="Ravel J."/>
        </authorList>
    </citation>
    <scope>NUCLEOTIDE SEQUENCE [LARGE SCALE GENOMIC DNA]</scope>
    <source>
        <strain>HS</strain>
    </source>
</reference>
<protein>
    <recommendedName>
        <fullName evidence="1">Homoserine kinase</fullName>
        <shortName evidence="1">HK</shortName>
        <shortName evidence="1">HSK</shortName>
        <ecNumber evidence="1">2.7.1.39</ecNumber>
    </recommendedName>
</protein>
<name>KHSE_ECOHS</name>
<gene>
    <name evidence="1" type="primary">thrB</name>
    <name type="ordered locus">EcHS_A0004</name>
</gene>
<keyword id="KW-0028">Amino-acid biosynthesis</keyword>
<keyword id="KW-0067">ATP-binding</keyword>
<keyword id="KW-0963">Cytoplasm</keyword>
<keyword id="KW-0418">Kinase</keyword>
<keyword id="KW-0547">Nucleotide-binding</keyword>
<keyword id="KW-0791">Threonine biosynthesis</keyword>
<keyword id="KW-0808">Transferase</keyword>
<dbReference type="EC" id="2.7.1.39" evidence="1"/>
<dbReference type="EMBL" id="CP000802">
    <property type="protein sequence ID" value="ABV04405.1"/>
    <property type="molecule type" value="Genomic_DNA"/>
</dbReference>
<dbReference type="RefSeq" id="WP_000241660.1">
    <property type="nucleotide sequence ID" value="NC_009800.1"/>
</dbReference>
<dbReference type="SMR" id="A7ZVW2"/>
<dbReference type="GeneID" id="75202912"/>
<dbReference type="KEGG" id="ecx:EcHS_A0004"/>
<dbReference type="HOGENOM" id="CLU_041243_1_1_6"/>
<dbReference type="UniPathway" id="UPA00050">
    <property type="reaction ID" value="UER00064"/>
</dbReference>
<dbReference type="GO" id="GO:0005737">
    <property type="term" value="C:cytoplasm"/>
    <property type="evidence" value="ECO:0007669"/>
    <property type="project" value="UniProtKB-SubCell"/>
</dbReference>
<dbReference type="GO" id="GO:0005524">
    <property type="term" value="F:ATP binding"/>
    <property type="evidence" value="ECO:0007669"/>
    <property type="project" value="UniProtKB-UniRule"/>
</dbReference>
<dbReference type="GO" id="GO:0004413">
    <property type="term" value="F:homoserine kinase activity"/>
    <property type="evidence" value="ECO:0007669"/>
    <property type="project" value="UniProtKB-UniRule"/>
</dbReference>
<dbReference type="GO" id="GO:0009088">
    <property type="term" value="P:threonine biosynthetic process"/>
    <property type="evidence" value="ECO:0007669"/>
    <property type="project" value="UniProtKB-UniRule"/>
</dbReference>
<dbReference type="FunFam" id="3.30.230.10:FF:000020">
    <property type="entry name" value="Homoserine kinase"/>
    <property type="match status" value="1"/>
</dbReference>
<dbReference type="FunFam" id="3.30.70.890:FF:000002">
    <property type="entry name" value="Homoserine kinase"/>
    <property type="match status" value="1"/>
</dbReference>
<dbReference type="Gene3D" id="3.30.230.10">
    <property type="match status" value="1"/>
</dbReference>
<dbReference type="Gene3D" id="3.30.70.890">
    <property type="entry name" value="GHMP kinase, C-terminal domain"/>
    <property type="match status" value="1"/>
</dbReference>
<dbReference type="HAMAP" id="MF_00384">
    <property type="entry name" value="Homoser_kinase"/>
    <property type="match status" value="1"/>
</dbReference>
<dbReference type="InterPro" id="IPR013750">
    <property type="entry name" value="GHMP_kinase_C_dom"/>
</dbReference>
<dbReference type="InterPro" id="IPR036554">
    <property type="entry name" value="GHMP_kinase_C_sf"/>
</dbReference>
<dbReference type="InterPro" id="IPR006204">
    <property type="entry name" value="GHMP_kinase_N_dom"/>
</dbReference>
<dbReference type="InterPro" id="IPR006203">
    <property type="entry name" value="GHMP_knse_ATP-bd_CS"/>
</dbReference>
<dbReference type="InterPro" id="IPR000870">
    <property type="entry name" value="Homoserine_kinase"/>
</dbReference>
<dbReference type="InterPro" id="IPR020568">
    <property type="entry name" value="Ribosomal_Su5_D2-typ_SF"/>
</dbReference>
<dbReference type="InterPro" id="IPR014721">
    <property type="entry name" value="Ribsml_uS5_D2-typ_fold_subgr"/>
</dbReference>
<dbReference type="NCBIfam" id="NF002288">
    <property type="entry name" value="PRK01212.1-4"/>
    <property type="match status" value="1"/>
</dbReference>
<dbReference type="NCBIfam" id="TIGR00191">
    <property type="entry name" value="thrB"/>
    <property type="match status" value="1"/>
</dbReference>
<dbReference type="PANTHER" id="PTHR20861:SF1">
    <property type="entry name" value="HOMOSERINE KINASE"/>
    <property type="match status" value="1"/>
</dbReference>
<dbReference type="PANTHER" id="PTHR20861">
    <property type="entry name" value="HOMOSERINE/4-DIPHOSPHOCYTIDYL-2-C-METHYL-D-ERYTHRITOL KINASE"/>
    <property type="match status" value="1"/>
</dbReference>
<dbReference type="Pfam" id="PF08544">
    <property type="entry name" value="GHMP_kinases_C"/>
    <property type="match status" value="1"/>
</dbReference>
<dbReference type="Pfam" id="PF00288">
    <property type="entry name" value="GHMP_kinases_N"/>
    <property type="match status" value="1"/>
</dbReference>
<dbReference type="PIRSF" id="PIRSF000676">
    <property type="entry name" value="Homoser_kin"/>
    <property type="match status" value="1"/>
</dbReference>
<dbReference type="PRINTS" id="PR00958">
    <property type="entry name" value="HOMSERKINASE"/>
</dbReference>
<dbReference type="SUPFAM" id="SSF55060">
    <property type="entry name" value="GHMP Kinase, C-terminal domain"/>
    <property type="match status" value="1"/>
</dbReference>
<dbReference type="SUPFAM" id="SSF54211">
    <property type="entry name" value="Ribosomal protein S5 domain 2-like"/>
    <property type="match status" value="1"/>
</dbReference>
<dbReference type="PROSITE" id="PS00627">
    <property type="entry name" value="GHMP_KINASES_ATP"/>
    <property type="match status" value="1"/>
</dbReference>
<comment type="function">
    <text evidence="1">Catalyzes the ATP-dependent phosphorylation of L-homoserine to L-homoserine phosphate.</text>
</comment>
<comment type="catalytic activity">
    <reaction evidence="1">
        <text>L-homoserine + ATP = O-phospho-L-homoserine + ADP + H(+)</text>
        <dbReference type="Rhea" id="RHEA:13985"/>
        <dbReference type="ChEBI" id="CHEBI:15378"/>
        <dbReference type="ChEBI" id="CHEBI:30616"/>
        <dbReference type="ChEBI" id="CHEBI:57476"/>
        <dbReference type="ChEBI" id="CHEBI:57590"/>
        <dbReference type="ChEBI" id="CHEBI:456216"/>
        <dbReference type="EC" id="2.7.1.39"/>
    </reaction>
</comment>
<comment type="pathway">
    <text evidence="1">Amino-acid biosynthesis; L-threonine biosynthesis; L-threonine from L-aspartate: step 4/5.</text>
</comment>
<comment type="subcellular location">
    <subcellularLocation>
        <location evidence="1">Cytoplasm</location>
    </subcellularLocation>
</comment>
<comment type="similarity">
    <text evidence="1">Belongs to the GHMP kinase family. Homoserine kinase subfamily.</text>
</comment>
<organism>
    <name type="scientific">Escherichia coli O9:H4 (strain HS)</name>
    <dbReference type="NCBI Taxonomy" id="331112"/>
    <lineage>
        <taxon>Bacteria</taxon>
        <taxon>Pseudomonadati</taxon>
        <taxon>Pseudomonadota</taxon>
        <taxon>Gammaproteobacteria</taxon>
        <taxon>Enterobacterales</taxon>
        <taxon>Enterobacteriaceae</taxon>
        <taxon>Escherichia</taxon>
    </lineage>
</organism>
<evidence type="ECO:0000255" key="1">
    <source>
        <dbReference type="HAMAP-Rule" id="MF_00384"/>
    </source>
</evidence>
<feature type="chain" id="PRO_1000060700" description="Homoserine kinase">
    <location>
        <begin position="1"/>
        <end position="310"/>
    </location>
</feature>
<feature type="binding site" evidence="1">
    <location>
        <begin position="91"/>
        <end position="101"/>
    </location>
    <ligand>
        <name>ATP</name>
        <dbReference type="ChEBI" id="CHEBI:30616"/>
    </ligand>
</feature>
<accession>A7ZVW2</accession>